<organism>
    <name type="scientific">Human papillomavirus 19</name>
    <dbReference type="NCBI Taxonomy" id="10608"/>
    <lineage>
        <taxon>Viruses</taxon>
        <taxon>Monodnaviria</taxon>
        <taxon>Shotokuvirae</taxon>
        <taxon>Cossaviricota</taxon>
        <taxon>Papovaviricetes</taxon>
        <taxon>Zurhausenvirales</taxon>
        <taxon>Papillomaviridae</taxon>
        <taxon>Firstpapillomavirinae</taxon>
        <taxon>Betapapillomavirus</taxon>
        <taxon>Betapapillomavirus 1</taxon>
    </lineage>
</organism>
<keyword id="KW-0167">Capsid protein</keyword>
<keyword id="KW-1015">Disulfide bond</keyword>
<keyword id="KW-1048">Host nucleus</keyword>
<keyword id="KW-0945">Host-virus interaction</keyword>
<keyword id="KW-0426">Late protein</keyword>
<keyword id="KW-1145">T=7 icosahedral capsid protein</keyword>
<keyword id="KW-1161">Viral attachment to host cell</keyword>
<keyword id="KW-1162">Viral penetration into host cytoplasm</keyword>
<keyword id="KW-0946">Virion</keyword>
<keyword id="KW-1164">Virus endocytosis by host</keyword>
<keyword id="KW-1160">Virus entry into host cell</keyword>
<name>VL1_HPV19</name>
<dbReference type="EMBL" id="X74470">
    <property type="protein sequence ID" value="CAA52523.1"/>
    <property type="molecule type" value="Genomic_DNA"/>
</dbReference>
<dbReference type="EMBL" id="M96288">
    <property type="protein sequence ID" value="AAA47027.1"/>
    <property type="molecule type" value="Genomic_DNA"/>
</dbReference>
<dbReference type="PIR" id="S36490">
    <property type="entry name" value="S36490"/>
</dbReference>
<dbReference type="SMR" id="Q02050"/>
<dbReference type="Proteomes" id="UP000009110">
    <property type="component" value="Genome"/>
</dbReference>
<dbReference type="GO" id="GO:0042025">
    <property type="term" value="C:host cell nucleus"/>
    <property type="evidence" value="ECO:0007669"/>
    <property type="project" value="UniProtKB-SubCell"/>
</dbReference>
<dbReference type="GO" id="GO:0039620">
    <property type="term" value="C:T=7 icosahedral viral capsid"/>
    <property type="evidence" value="ECO:0007669"/>
    <property type="project" value="UniProtKB-UniRule"/>
</dbReference>
<dbReference type="GO" id="GO:0005198">
    <property type="term" value="F:structural molecule activity"/>
    <property type="evidence" value="ECO:0007669"/>
    <property type="project" value="UniProtKB-UniRule"/>
</dbReference>
<dbReference type="GO" id="GO:0075509">
    <property type="term" value="P:endocytosis involved in viral entry into host cell"/>
    <property type="evidence" value="ECO:0007669"/>
    <property type="project" value="UniProtKB-KW"/>
</dbReference>
<dbReference type="GO" id="GO:0019062">
    <property type="term" value="P:virion attachment to host cell"/>
    <property type="evidence" value="ECO:0007669"/>
    <property type="project" value="UniProtKB-UniRule"/>
</dbReference>
<dbReference type="Gene3D" id="2.60.175.20">
    <property type="entry name" value="Major capsid L1 (late) superfamily, Papillomavirus"/>
    <property type="match status" value="2"/>
</dbReference>
<dbReference type="HAMAP" id="MF_04002">
    <property type="entry name" value="PPV_L1"/>
    <property type="match status" value="1"/>
</dbReference>
<dbReference type="InterPro" id="IPR002210">
    <property type="entry name" value="Capsid_L1_Papillomavir"/>
</dbReference>
<dbReference type="InterPro" id="IPR036973">
    <property type="entry name" value="Capsid_L1_sf_Papillomavir"/>
</dbReference>
<dbReference type="InterPro" id="IPR011222">
    <property type="entry name" value="dsDNA_vir_gr_I_capsid"/>
</dbReference>
<dbReference type="Pfam" id="PF00500">
    <property type="entry name" value="Late_protein_L1"/>
    <property type="match status" value="1"/>
</dbReference>
<dbReference type="PRINTS" id="PR00865">
    <property type="entry name" value="HPVCAPSIDL1"/>
</dbReference>
<dbReference type="SUPFAM" id="SSF88648">
    <property type="entry name" value="Group I dsDNA viruses"/>
    <property type="match status" value="1"/>
</dbReference>
<reference key="1">
    <citation type="journal article" date="1994" name="Curr. Top. Microbiol. Immunol.">
        <title>Primer-directed sequencing of human papillomavirus types.</title>
        <authorList>
            <person name="Delius H."/>
            <person name="Hofmann B."/>
        </authorList>
    </citation>
    <scope>NUCLEOTIDE SEQUENCE [GENOMIC DNA]</scope>
</reference>
<reference key="2">
    <citation type="journal article" date="1992" name="J. Virol.">
        <title>Phylogenetic analysis of 48 papillomavirus types and 28 subtypes and variants: a showcase for the molecular evolution of DNA viruses.</title>
        <authorList>
            <person name="Chan S.-Y."/>
            <person name="Bernard H.U."/>
            <person name="Ong C.K."/>
            <person name="Chan S.P."/>
            <person name="Birgit H."/>
            <person name="Delius H."/>
        </authorList>
    </citation>
    <scope>NUCLEOTIDE SEQUENCE [GENOMIC DNA] OF 344-387</scope>
</reference>
<gene>
    <name evidence="1" type="primary">L1</name>
</gene>
<proteinExistence type="inferred from homology"/>
<feature type="chain" id="PRO_0000133503" description="Major capsid protein L1">
    <location>
        <begin position="1"/>
        <end position="546"/>
    </location>
</feature>
<feature type="disulfide bond" description="Interchain (with C-474)" evidence="1">
    <location>
        <position position="204"/>
    </location>
</feature>
<feature type="disulfide bond" description="Interchain (with C-204)" evidence="1">
    <location>
        <position position="474"/>
    </location>
</feature>
<organismHost>
    <name type="scientific">Homo sapiens</name>
    <name type="common">Human</name>
    <dbReference type="NCBI Taxonomy" id="9606"/>
</organismHost>
<sequence length="546" mass="61683">MTPVVIFTYIPAFASDSNENVNIYNFLLQMAVWQAASGKVYLPPSTPVARVQSTDEYVQRTNIYYHAYSDRLLTVGHPYFNVYNVAGSKLEIPKVSGNQHRVFRLKLPDPNRFALADMSVYNPDKERLVWGCRGIEIGRGQPLGVGSVGHPLFNKVGDTENPNSYKGTSTDDRQNVSFDPKQLQMFIIGCAPCIGEHWDKALPCAEQDIPQGSCPPIELINSVIEDGDMADIGYGNLNFKALQQNRSDVSLDIVNETCKYPDFLKMQNDVYGDSCFFYARREQCYARHFFVRGGKTGDDIPAGQIDEGSMKNTYYIPPNNSQQQYTNLGNAMYFPTVSGSLVSSDAQLFNRPFWLQRAQGHNNGICWFNQLFVTVVDNTRNTNFSISVNSDGTDVAKIADYNSANFKEYLRHVEEYEISLILQLCKIPLKAEVLAQINAMNSNILEEWQLGFVPAPDNPIQDTYRYIDSLATRCPDKNPPKEKVDPYKNLHFWNVDLSERLSLDLDQYALGRKFLFQAGLQQATVNGTKTISSRVSSRGTKRKRKN</sequence>
<evidence type="ECO:0000255" key="1">
    <source>
        <dbReference type="HAMAP-Rule" id="MF_04002"/>
    </source>
</evidence>
<accession>Q02050</accession>
<comment type="function">
    <text evidence="1">Forms an icosahedral capsid with a T=7 symmetry and a 50 nm diameter. The capsid is composed of 72 pentamers linked to each other by disulfide bonds and associated with L2 proteins. Binds to heparan sulfate proteoglycans on cell surface of basal layer keratinocytes to provide initial virion attachment. This binding mediates a conformational change in the virus capsid that facilitates efficient infection. The virion enters the host cell via endocytosis. During virus trafficking, L1 protein dissociates from the viral DNA and the genomic DNA is released to the host nucleus. The virion assembly takes place within the cell nucleus. Encapsulates the genomic DNA together with protein L2.</text>
</comment>
<comment type="subunit">
    <text evidence="1">Self-assembles into homopentamers. The capsid has an icosahedral symmetry and consists of 72 capsomers, with each capsomer being a pentamer of L1. Interacts with the minor capsid protein L2; this interaction is necessary for viral genome encapsidation. Interacts with protein E2; this interaction enhances E2-dependent replication and transcription activation.</text>
</comment>
<comment type="subcellular location">
    <subcellularLocation>
        <location evidence="1">Virion</location>
    </subcellularLocation>
    <subcellularLocation>
        <location evidence="1">Host nucleus</location>
    </subcellularLocation>
</comment>
<comment type="similarity">
    <text evidence="1">Belongs to the papillomaviridae L1 protein family.</text>
</comment>
<protein>
    <recommendedName>
        <fullName evidence="1">Major capsid protein L1</fullName>
    </recommendedName>
</protein>